<feature type="transit peptide" description="Mitochondrion" evidence="2">
    <location>
        <begin position="1"/>
        <end status="unknown"/>
    </location>
</feature>
<feature type="chain" id="PRO_0000383807" description="Large ribosomal subunit protein bL36m">
    <location>
        <begin status="unknown"/>
        <end position="97"/>
    </location>
</feature>
<reference key="1">
    <citation type="submission" date="2005-09" db="EMBL/GenBank/DDBJ databases">
        <authorList>
            <person name="Mural R.J."/>
            <person name="Adams M.D."/>
            <person name="Myers E.W."/>
            <person name="Smith H.O."/>
            <person name="Venter J.C."/>
        </authorList>
    </citation>
    <scope>NUCLEOTIDE SEQUENCE [LARGE SCALE GENOMIC DNA]</scope>
</reference>
<reference key="2">
    <citation type="journal article" date="2004" name="Genome Res.">
        <title>The status, quality, and expansion of the NIH full-length cDNA project: the Mammalian Gene Collection (MGC).</title>
        <authorList>
            <consortium name="The MGC Project Team"/>
        </authorList>
    </citation>
    <scope>NUCLEOTIDE SEQUENCE [LARGE SCALE MRNA]</scope>
    <source>
        <tissue>Spleen</tissue>
    </source>
</reference>
<gene>
    <name type="primary">Mrpl36</name>
</gene>
<comment type="subunit">
    <text evidence="1">Component of the mitochondrial ribosome large subunit (39S) which comprises a 16S rRNA and about 50 distinct proteins.</text>
</comment>
<comment type="subcellular location">
    <subcellularLocation>
        <location evidence="1">Mitochondrion</location>
    </subcellularLocation>
</comment>
<comment type="similarity">
    <text evidence="3">Belongs to the bacterial ribosomal protein bL36 family.</text>
</comment>
<evidence type="ECO:0000250" key="1">
    <source>
        <dbReference type="UniProtKB" id="Q9P0J6"/>
    </source>
</evidence>
<evidence type="ECO:0000255" key="2"/>
<evidence type="ECO:0000305" key="3"/>
<proteinExistence type="inferred from homology"/>
<organism>
    <name type="scientific">Rattus norvegicus</name>
    <name type="common">Rat</name>
    <dbReference type="NCBI Taxonomy" id="10116"/>
    <lineage>
        <taxon>Eukaryota</taxon>
        <taxon>Metazoa</taxon>
        <taxon>Chordata</taxon>
        <taxon>Craniata</taxon>
        <taxon>Vertebrata</taxon>
        <taxon>Euteleostomi</taxon>
        <taxon>Mammalia</taxon>
        <taxon>Eutheria</taxon>
        <taxon>Euarchontoglires</taxon>
        <taxon>Glires</taxon>
        <taxon>Rodentia</taxon>
        <taxon>Myomorpha</taxon>
        <taxon>Muroidea</taxon>
        <taxon>Muridae</taxon>
        <taxon>Murinae</taxon>
        <taxon>Rattus</taxon>
    </lineage>
</organism>
<sequence length="97" mass="10801">MAALFVRSVVASVVDLSRLAVKPRAFSILLGTLPSAKPCAEVRSLLCGGPVLSLQPSLGFKTKGVIKKRCRDCYMVKRRGRWFVLCKTNPKHKQRQM</sequence>
<keyword id="KW-0496">Mitochondrion</keyword>
<keyword id="KW-1185">Reference proteome</keyword>
<keyword id="KW-0687">Ribonucleoprotein</keyword>
<keyword id="KW-0689">Ribosomal protein</keyword>
<keyword id="KW-0809">Transit peptide</keyword>
<name>RM36_RAT</name>
<accession>B2RZ39</accession>
<dbReference type="EMBL" id="CH474002">
    <property type="protein sequence ID" value="EDL87648.1"/>
    <property type="molecule type" value="Genomic_DNA"/>
</dbReference>
<dbReference type="EMBL" id="CH474002">
    <property type="protein sequence ID" value="EDL87649.1"/>
    <property type="molecule type" value="Genomic_DNA"/>
</dbReference>
<dbReference type="EMBL" id="BC167015">
    <property type="protein sequence ID" value="AAI67015.1"/>
    <property type="molecule type" value="mRNA"/>
</dbReference>
<dbReference type="RefSeq" id="NP_001102349.1">
    <property type="nucleotide sequence ID" value="NM_001108879.1"/>
</dbReference>
<dbReference type="RefSeq" id="XP_003748731.1">
    <property type="nucleotide sequence ID" value="XM_003748683.3"/>
</dbReference>
<dbReference type="RefSeq" id="XP_003753204.1">
    <property type="nucleotide sequence ID" value="XM_003753156.3"/>
</dbReference>
<dbReference type="RefSeq" id="XP_006222939.1">
    <property type="nucleotide sequence ID" value="XM_006222877.2"/>
</dbReference>
<dbReference type="RefSeq" id="XP_006222940.1">
    <property type="nucleotide sequence ID" value="XM_006222878.3"/>
</dbReference>
<dbReference type="RefSeq" id="XP_006222941.1">
    <property type="nucleotide sequence ID" value="XM_006222879.3"/>
</dbReference>
<dbReference type="RefSeq" id="XP_006227824.1">
    <property type="nucleotide sequence ID" value="XM_006227762.4"/>
</dbReference>
<dbReference type="RefSeq" id="XP_006227825.1">
    <property type="nucleotide sequence ID" value="XM_006227763.4"/>
</dbReference>
<dbReference type="RefSeq" id="XP_006227826.1">
    <property type="nucleotide sequence ID" value="XM_006227764.5"/>
</dbReference>
<dbReference type="RefSeq" id="XP_006227827.1">
    <property type="nucleotide sequence ID" value="XM_006227765.5"/>
</dbReference>
<dbReference type="RefSeq" id="XP_006227864.1">
    <property type="nucleotide sequence ID" value="XM_006227802.2"/>
</dbReference>
<dbReference type="RefSeq" id="XP_006227865.1">
    <property type="nucleotide sequence ID" value="XM_006227803.3"/>
</dbReference>
<dbReference type="RefSeq" id="XP_006227866.1">
    <property type="nucleotide sequence ID" value="XM_006227804.3"/>
</dbReference>
<dbReference type="RefSeq" id="XP_017444511.1">
    <property type="nucleotide sequence ID" value="XM_017589022.1"/>
</dbReference>
<dbReference type="RefSeq" id="XP_017444951.1">
    <property type="nucleotide sequence ID" value="XM_017589462.3"/>
</dbReference>
<dbReference type="RefSeq" id="XP_017445366.1">
    <property type="nucleotide sequence ID" value="XM_017589877.1"/>
</dbReference>
<dbReference type="SMR" id="B2RZ39"/>
<dbReference type="FunCoup" id="B2RZ39">
    <property type="interactions" value="127"/>
</dbReference>
<dbReference type="STRING" id="10116.ENSRNOP00000032662"/>
<dbReference type="PaxDb" id="10116-ENSRNOP00000032662"/>
<dbReference type="Ensembl" id="ENSRNOT00000029531.6">
    <property type="protein sequence ID" value="ENSRNOP00000032662.3"/>
    <property type="gene ID" value="ENSRNOG00000023407.6"/>
</dbReference>
<dbReference type="Ensembl" id="ENSRNOT00000072992.2">
    <property type="protein sequence ID" value="ENSRNOP00000067146.1"/>
    <property type="gene ID" value="ENSRNOG00000023407.6"/>
</dbReference>
<dbReference type="Ensembl" id="ENSRNOT00000110261.1">
    <property type="protein sequence ID" value="ENSRNOP00000092978.1"/>
    <property type="gene ID" value="ENSRNOG00000023407.6"/>
</dbReference>
<dbReference type="GeneID" id="364656"/>
<dbReference type="KEGG" id="rno:364656"/>
<dbReference type="UCSC" id="RGD:1306375">
    <property type="organism name" value="rat"/>
</dbReference>
<dbReference type="AGR" id="RGD:1306375"/>
<dbReference type="CTD" id="64979"/>
<dbReference type="RGD" id="1306375">
    <property type="gene designation" value="Mrpl36"/>
</dbReference>
<dbReference type="eggNOG" id="KOG4122">
    <property type="taxonomic scope" value="Eukaryota"/>
</dbReference>
<dbReference type="GeneTree" id="ENSGT00390000010866"/>
<dbReference type="HOGENOM" id="CLU_135723_0_0_1"/>
<dbReference type="InParanoid" id="B2RZ39"/>
<dbReference type="OMA" id="MWAPVAV"/>
<dbReference type="OrthoDB" id="10265903at2759"/>
<dbReference type="PhylomeDB" id="B2RZ39"/>
<dbReference type="TreeFam" id="TF300275"/>
<dbReference type="Reactome" id="R-RNO-5389840">
    <property type="pathway name" value="Mitochondrial translation elongation"/>
</dbReference>
<dbReference type="Reactome" id="R-RNO-5419276">
    <property type="pathway name" value="Mitochondrial translation termination"/>
</dbReference>
<dbReference type="PRO" id="PR:B2RZ39"/>
<dbReference type="Proteomes" id="UP000002494">
    <property type="component" value="Chromosome 1"/>
</dbReference>
<dbReference type="Proteomes" id="UP000234681">
    <property type="component" value="Chromosome 1"/>
</dbReference>
<dbReference type="Bgee" id="ENSRNOG00000023407">
    <property type="expression patterns" value="Expressed in stomach and 19 other cell types or tissues"/>
</dbReference>
<dbReference type="GO" id="GO:0005762">
    <property type="term" value="C:mitochondrial large ribosomal subunit"/>
    <property type="evidence" value="ECO:0000250"/>
    <property type="project" value="UniProtKB"/>
</dbReference>
<dbReference type="GO" id="GO:0003735">
    <property type="term" value="F:structural constituent of ribosome"/>
    <property type="evidence" value="ECO:0007669"/>
    <property type="project" value="InterPro"/>
</dbReference>
<dbReference type="GO" id="GO:0006412">
    <property type="term" value="P:translation"/>
    <property type="evidence" value="ECO:0007669"/>
    <property type="project" value="InterPro"/>
</dbReference>
<dbReference type="HAMAP" id="MF_00251">
    <property type="entry name" value="Ribosomal_bL36"/>
    <property type="match status" value="1"/>
</dbReference>
<dbReference type="InterPro" id="IPR052143">
    <property type="entry name" value="Mitoribosomal_bL36m"/>
</dbReference>
<dbReference type="InterPro" id="IPR000473">
    <property type="entry name" value="Ribosomal_bL36"/>
</dbReference>
<dbReference type="InterPro" id="IPR035977">
    <property type="entry name" value="Ribosomal_bL36_sp"/>
</dbReference>
<dbReference type="NCBIfam" id="TIGR01022">
    <property type="entry name" value="rpmJ_bact"/>
    <property type="match status" value="1"/>
</dbReference>
<dbReference type="PANTHER" id="PTHR46909">
    <property type="entry name" value="39S RIBOSOMAL PROTEIN L36, MITOCHONDRIAL"/>
    <property type="match status" value="1"/>
</dbReference>
<dbReference type="PANTHER" id="PTHR46909:SF1">
    <property type="entry name" value="LARGE RIBOSOMAL SUBUNIT PROTEIN BL36M"/>
    <property type="match status" value="1"/>
</dbReference>
<dbReference type="Pfam" id="PF00444">
    <property type="entry name" value="Ribosomal_L36"/>
    <property type="match status" value="1"/>
</dbReference>
<dbReference type="SUPFAM" id="SSF57840">
    <property type="entry name" value="Ribosomal protein L36"/>
    <property type="match status" value="1"/>
</dbReference>
<protein>
    <recommendedName>
        <fullName evidence="3">Large ribosomal subunit protein bL36m</fullName>
    </recommendedName>
    <alternativeName>
        <fullName>39S ribosomal protein L36, mitochondrial</fullName>
        <shortName>L36mt</shortName>
        <shortName>MRP-L36</shortName>
    </alternativeName>
</protein>